<keyword id="KW-0479">Metal-binding</keyword>
<keyword id="KW-0687">Ribonucleoprotein</keyword>
<keyword id="KW-0689">Ribosomal protein</keyword>
<keyword id="KW-0694">RNA-binding</keyword>
<keyword id="KW-0699">rRNA-binding</keyword>
<keyword id="KW-0862">Zinc</keyword>
<organism>
    <name type="scientific">Campylobacter concisus (strain 13826)</name>
    <dbReference type="NCBI Taxonomy" id="360104"/>
    <lineage>
        <taxon>Bacteria</taxon>
        <taxon>Pseudomonadati</taxon>
        <taxon>Campylobacterota</taxon>
        <taxon>Epsilonproteobacteria</taxon>
        <taxon>Campylobacterales</taxon>
        <taxon>Campylobacteraceae</taxon>
        <taxon>Campylobacter</taxon>
    </lineage>
</organism>
<feature type="chain" id="PRO_1000073394" description="Small ribosomal subunit protein uS14">
    <location>
        <begin position="1"/>
        <end position="61"/>
    </location>
</feature>
<feature type="binding site" evidence="1">
    <location>
        <position position="24"/>
    </location>
    <ligand>
        <name>Zn(2+)</name>
        <dbReference type="ChEBI" id="CHEBI:29105"/>
    </ligand>
</feature>
<feature type="binding site" evidence="1">
    <location>
        <position position="27"/>
    </location>
    <ligand>
        <name>Zn(2+)</name>
        <dbReference type="ChEBI" id="CHEBI:29105"/>
    </ligand>
</feature>
<feature type="binding site" evidence="1">
    <location>
        <position position="40"/>
    </location>
    <ligand>
        <name>Zn(2+)</name>
        <dbReference type="ChEBI" id="CHEBI:29105"/>
    </ligand>
</feature>
<feature type="binding site" evidence="1">
    <location>
        <position position="43"/>
    </location>
    <ligand>
        <name>Zn(2+)</name>
        <dbReference type="ChEBI" id="CHEBI:29105"/>
    </ligand>
</feature>
<sequence>MAKKSMIAKAARKPKFAVRGYTRCQICGRPHSVYKDFGICRVCLRKMANEGLIPGLKKASW</sequence>
<name>RS14Z_CAMC1</name>
<gene>
    <name evidence="1" type="primary">rpsZ</name>
    <name evidence="1" type="synonym">rpsN</name>
    <name type="ordered locus">Ccon26_18720</name>
    <name type="ORF">CCC13826_1764</name>
</gene>
<accession>A7ZFZ9</accession>
<comment type="function">
    <text evidence="1">Binds 16S rRNA, required for the assembly of 30S particles and may also be responsible for determining the conformation of the 16S rRNA at the A site.</text>
</comment>
<comment type="cofactor">
    <cofactor evidence="1">
        <name>Zn(2+)</name>
        <dbReference type="ChEBI" id="CHEBI:29105"/>
    </cofactor>
    <text evidence="1">Binds 1 zinc ion per subunit.</text>
</comment>
<comment type="subunit">
    <text evidence="1">Part of the 30S ribosomal subunit. Contacts proteins S3 and S10.</text>
</comment>
<comment type="similarity">
    <text evidence="1">Belongs to the universal ribosomal protein uS14 family. Zinc-binding uS14 subfamily.</text>
</comment>
<dbReference type="EMBL" id="CP000792">
    <property type="protein sequence ID" value="EAT98138.1"/>
    <property type="molecule type" value="Genomic_DNA"/>
</dbReference>
<dbReference type="RefSeq" id="WP_002941532.1">
    <property type="nucleotide sequence ID" value="NC_009802.2"/>
</dbReference>
<dbReference type="SMR" id="A7ZFZ9"/>
<dbReference type="STRING" id="360104.CCC13826_1764"/>
<dbReference type="KEGG" id="cco:CCC13826_1764"/>
<dbReference type="eggNOG" id="COG0199">
    <property type="taxonomic scope" value="Bacteria"/>
</dbReference>
<dbReference type="HOGENOM" id="CLU_139869_3_0_7"/>
<dbReference type="OrthoDB" id="9810484at2"/>
<dbReference type="Proteomes" id="UP000001121">
    <property type="component" value="Chromosome"/>
</dbReference>
<dbReference type="GO" id="GO:0005737">
    <property type="term" value="C:cytoplasm"/>
    <property type="evidence" value="ECO:0007669"/>
    <property type="project" value="UniProtKB-ARBA"/>
</dbReference>
<dbReference type="GO" id="GO:0015935">
    <property type="term" value="C:small ribosomal subunit"/>
    <property type="evidence" value="ECO:0007669"/>
    <property type="project" value="TreeGrafter"/>
</dbReference>
<dbReference type="GO" id="GO:0019843">
    <property type="term" value="F:rRNA binding"/>
    <property type="evidence" value="ECO:0007669"/>
    <property type="project" value="UniProtKB-UniRule"/>
</dbReference>
<dbReference type="GO" id="GO:0003735">
    <property type="term" value="F:structural constituent of ribosome"/>
    <property type="evidence" value="ECO:0007669"/>
    <property type="project" value="InterPro"/>
</dbReference>
<dbReference type="GO" id="GO:0008270">
    <property type="term" value="F:zinc ion binding"/>
    <property type="evidence" value="ECO:0007669"/>
    <property type="project" value="UniProtKB-UniRule"/>
</dbReference>
<dbReference type="GO" id="GO:0006412">
    <property type="term" value="P:translation"/>
    <property type="evidence" value="ECO:0007669"/>
    <property type="project" value="UniProtKB-UniRule"/>
</dbReference>
<dbReference type="FunFam" id="4.10.830.10:FF:000001">
    <property type="entry name" value="30S ribosomal protein S14 type Z"/>
    <property type="match status" value="1"/>
</dbReference>
<dbReference type="Gene3D" id="4.10.830.10">
    <property type="entry name" value="30s Ribosomal Protein S14, Chain N"/>
    <property type="match status" value="1"/>
</dbReference>
<dbReference type="HAMAP" id="MF_01364_B">
    <property type="entry name" value="Ribosomal_uS14_2_B"/>
    <property type="match status" value="1"/>
</dbReference>
<dbReference type="InterPro" id="IPR001209">
    <property type="entry name" value="Ribosomal_uS14"/>
</dbReference>
<dbReference type="InterPro" id="IPR023053">
    <property type="entry name" value="Ribosomal_uS14_bact"/>
</dbReference>
<dbReference type="InterPro" id="IPR018271">
    <property type="entry name" value="Ribosomal_uS14_CS"/>
</dbReference>
<dbReference type="InterPro" id="IPR043140">
    <property type="entry name" value="Ribosomal_uS14_sf"/>
</dbReference>
<dbReference type="NCBIfam" id="NF005974">
    <property type="entry name" value="PRK08061.1"/>
    <property type="match status" value="1"/>
</dbReference>
<dbReference type="PANTHER" id="PTHR19836">
    <property type="entry name" value="30S RIBOSOMAL PROTEIN S14"/>
    <property type="match status" value="1"/>
</dbReference>
<dbReference type="PANTHER" id="PTHR19836:SF19">
    <property type="entry name" value="SMALL RIBOSOMAL SUBUNIT PROTEIN US14M"/>
    <property type="match status" value="1"/>
</dbReference>
<dbReference type="Pfam" id="PF00253">
    <property type="entry name" value="Ribosomal_S14"/>
    <property type="match status" value="1"/>
</dbReference>
<dbReference type="SUPFAM" id="SSF57716">
    <property type="entry name" value="Glucocorticoid receptor-like (DNA-binding domain)"/>
    <property type="match status" value="1"/>
</dbReference>
<dbReference type="PROSITE" id="PS00527">
    <property type="entry name" value="RIBOSOMAL_S14"/>
    <property type="match status" value="1"/>
</dbReference>
<proteinExistence type="inferred from homology"/>
<reference key="1">
    <citation type="submission" date="2007-10" db="EMBL/GenBank/DDBJ databases">
        <title>Genome sequence of Campylobacter concisus 13826 isolated from human feces.</title>
        <authorList>
            <person name="Fouts D.E."/>
            <person name="Mongodin E.F."/>
            <person name="Puiu D."/>
            <person name="Sebastian Y."/>
            <person name="Miller W.G."/>
            <person name="Mandrell R.E."/>
            <person name="On S."/>
            <person name="Nelson K.E."/>
        </authorList>
    </citation>
    <scope>NUCLEOTIDE SEQUENCE [LARGE SCALE GENOMIC DNA]</scope>
    <source>
        <strain>13826</strain>
    </source>
</reference>
<evidence type="ECO:0000255" key="1">
    <source>
        <dbReference type="HAMAP-Rule" id="MF_01364"/>
    </source>
</evidence>
<evidence type="ECO:0000305" key="2"/>
<protein>
    <recommendedName>
        <fullName evidence="1">Small ribosomal subunit protein uS14</fullName>
    </recommendedName>
    <alternativeName>
        <fullName evidence="2">30S ribosomal protein S14 type Z</fullName>
    </alternativeName>
</protein>